<accession>D0VWV4</accession>
<name>C560_PIG</name>
<dbReference type="RefSeq" id="XP_003125707.2">
    <property type="nucleotide sequence ID" value="XM_003125659.6"/>
</dbReference>
<dbReference type="PDB" id="1ZOY">
    <property type="method" value="X-ray"/>
    <property type="resolution" value="2.40 A"/>
    <property type="chains" value="C=30-169"/>
</dbReference>
<dbReference type="PDB" id="1ZP0">
    <property type="method" value="X-ray"/>
    <property type="resolution" value="3.50 A"/>
    <property type="chains" value="C=30-169"/>
</dbReference>
<dbReference type="PDB" id="3ABV">
    <property type="method" value="X-ray"/>
    <property type="resolution" value="3.24 A"/>
    <property type="chains" value="C=30-169"/>
</dbReference>
<dbReference type="PDB" id="3AE1">
    <property type="method" value="X-ray"/>
    <property type="resolution" value="3.14 A"/>
    <property type="chains" value="C=30-169"/>
</dbReference>
<dbReference type="PDB" id="3AE2">
    <property type="method" value="X-ray"/>
    <property type="resolution" value="3.10 A"/>
    <property type="chains" value="C=30-169"/>
</dbReference>
<dbReference type="PDB" id="3AE3">
    <property type="method" value="X-ray"/>
    <property type="resolution" value="3.35 A"/>
    <property type="chains" value="C=30-169"/>
</dbReference>
<dbReference type="PDB" id="3AE4">
    <property type="method" value="X-ray"/>
    <property type="resolution" value="2.91 A"/>
    <property type="chains" value="C=30-169"/>
</dbReference>
<dbReference type="PDB" id="3AE5">
    <property type="method" value="X-ray"/>
    <property type="resolution" value="3.41 A"/>
    <property type="chains" value="C=30-169"/>
</dbReference>
<dbReference type="PDB" id="3AE6">
    <property type="method" value="X-ray"/>
    <property type="resolution" value="3.40 A"/>
    <property type="chains" value="C=30-169"/>
</dbReference>
<dbReference type="PDB" id="3AE7">
    <property type="method" value="X-ray"/>
    <property type="resolution" value="3.62 A"/>
    <property type="chains" value="C=30-169"/>
</dbReference>
<dbReference type="PDB" id="3AE8">
    <property type="method" value="X-ray"/>
    <property type="resolution" value="3.40 A"/>
    <property type="chains" value="C=30-169"/>
</dbReference>
<dbReference type="PDB" id="3AE9">
    <property type="method" value="X-ray"/>
    <property type="resolution" value="3.31 A"/>
    <property type="chains" value="C=30-169"/>
</dbReference>
<dbReference type="PDB" id="3AEA">
    <property type="method" value="X-ray"/>
    <property type="resolution" value="3.39 A"/>
    <property type="chains" value="C=30-169"/>
</dbReference>
<dbReference type="PDB" id="3AEB">
    <property type="method" value="X-ray"/>
    <property type="resolution" value="3.00 A"/>
    <property type="chains" value="C=30-169"/>
</dbReference>
<dbReference type="PDB" id="3AEC">
    <property type="method" value="X-ray"/>
    <property type="resolution" value="3.61 A"/>
    <property type="chains" value="C=30-169"/>
</dbReference>
<dbReference type="PDB" id="3AED">
    <property type="method" value="X-ray"/>
    <property type="resolution" value="3.52 A"/>
    <property type="chains" value="C=30-169"/>
</dbReference>
<dbReference type="PDB" id="3AEE">
    <property type="method" value="X-ray"/>
    <property type="resolution" value="3.22 A"/>
    <property type="chains" value="C=30-169"/>
</dbReference>
<dbReference type="PDB" id="3AEF">
    <property type="method" value="X-ray"/>
    <property type="resolution" value="2.80 A"/>
    <property type="chains" value="C=30-169"/>
</dbReference>
<dbReference type="PDB" id="3AEG">
    <property type="method" value="X-ray"/>
    <property type="resolution" value="3.27 A"/>
    <property type="chains" value="C=30-169"/>
</dbReference>
<dbReference type="PDB" id="3SFD">
    <property type="method" value="X-ray"/>
    <property type="resolution" value="2.61 A"/>
    <property type="chains" value="C=30-169"/>
</dbReference>
<dbReference type="PDB" id="3SFE">
    <property type="method" value="X-ray"/>
    <property type="resolution" value="2.81 A"/>
    <property type="chains" value="C=30-169"/>
</dbReference>
<dbReference type="PDB" id="4YTP">
    <property type="method" value="X-ray"/>
    <property type="resolution" value="3.10 A"/>
    <property type="chains" value="C=1-169"/>
</dbReference>
<dbReference type="PDB" id="4YXD">
    <property type="method" value="X-ray"/>
    <property type="resolution" value="3.00 A"/>
    <property type="chains" value="C=1-169"/>
</dbReference>
<dbReference type="PDBsum" id="1ZOY"/>
<dbReference type="PDBsum" id="1ZP0"/>
<dbReference type="PDBsum" id="3ABV"/>
<dbReference type="PDBsum" id="3AE1"/>
<dbReference type="PDBsum" id="3AE2"/>
<dbReference type="PDBsum" id="3AE3"/>
<dbReference type="PDBsum" id="3AE4"/>
<dbReference type="PDBsum" id="3AE5"/>
<dbReference type="PDBsum" id="3AE6"/>
<dbReference type="PDBsum" id="3AE7"/>
<dbReference type="PDBsum" id="3AE8"/>
<dbReference type="PDBsum" id="3AE9"/>
<dbReference type="PDBsum" id="3AEA"/>
<dbReference type="PDBsum" id="3AEB"/>
<dbReference type="PDBsum" id="3AEC"/>
<dbReference type="PDBsum" id="3AED"/>
<dbReference type="PDBsum" id="3AEE"/>
<dbReference type="PDBsum" id="3AEF"/>
<dbReference type="PDBsum" id="3AEG"/>
<dbReference type="PDBsum" id="3SFD"/>
<dbReference type="PDBsum" id="3SFE"/>
<dbReference type="PDBsum" id="4YTP"/>
<dbReference type="PDBsum" id="4YXD"/>
<dbReference type="SMR" id="D0VWV4"/>
<dbReference type="FunCoup" id="D0VWV4">
    <property type="interactions" value="1290"/>
</dbReference>
<dbReference type="STRING" id="9823.ENSSSCP00000073139"/>
<dbReference type="BindingDB" id="D0VWV4"/>
<dbReference type="ChEMBL" id="CHEMBL2366564"/>
<dbReference type="PaxDb" id="9823-ENSSSCP00000027481"/>
<dbReference type="PeptideAtlas" id="D0VWV4"/>
<dbReference type="Ensembl" id="ENSSSCT00000045783.3">
    <property type="protein sequence ID" value="ENSSSCP00000053659.1"/>
    <property type="gene ID" value="ENSSSCG00000030318.4"/>
</dbReference>
<dbReference type="Ensembl" id="ENSSSCT00015011874.1">
    <property type="protein sequence ID" value="ENSSSCP00015004688.1"/>
    <property type="gene ID" value="ENSSSCG00015008931.1"/>
</dbReference>
<dbReference type="Ensembl" id="ENSSSCT00025006739.1">
    <property type="protein sequence ID" value="ENSSSCP00025002788.1"/>
    <property type="gene ID" value="ENSSSCG00025004969.1"/>
</dbReference>
<dbReference type="Ensembl" id="ENSSSCT00030039217.1">
    <property type="protein sequence ID" value="ENSSSCP00030018057.1"/>
    <property type="gene ID" value="ENSSSCG00030028035.1"/>
</dbReference>
<dbReference type="Ensembl" id="ENSSSCT00035098999.1">
    <property type="protein sequence ID" value="ENSSSCP00035041870.1"/>
    <property type="gene ID" value="ENSSSCG00035073083.1"/>
</dbReference>
<dbReference type="Ensembl" id="ENSSSCT00040078450.1">
    <property type="protein sequence ID" value="ENSSSCP00040033836.1"/>
    <property type="gene ID" value="ENSSSCG00040057801.1"/>
</dbReference>
<dbReference type="Ensembl" id="ENSSSCT00045057057.1">
    <property type="protein sequence ID" value="ENSSSCP00045039867.1"/>
    <property type="gene ID" value="ENSSSCG00045033311.1"/>
</dbReference>
<dbReference type="Ensembl" id="ENSSSCT00050043755.1">
    <property type="protein sequence ID" value="ENSSSCP00050018047.1"/>
    <property type="gene ID" value="ENSSSCG00050032579.1"/>
</dbReference>
<dbReference type="Ensembl" id="ENSSSCT00055004386.1">
    <property type="protein sequence ID" value="ENSSSCP00055003368.1"/>
    <property type="gene ID" value="ENSSSCG00055002313.1"/>
</dbReference>
<dbReference type="Ensembl" id="ENSSSCT00060069080.1">
    <property type="protein sequence ID" value="ENSSSCP00060029719.1"/>
    <property type="gene ID" value="ENSSSCG00060050777.1"/>
</dbReference>
<dbReference type="Ensembl" id="ENSSSCT00065037789.1">
    <property type="protein sequence ID" value="ENSSSCP00065015918.1"/>
    <property type="gene ID" value="ENSSSCG00065028024.1"/>
</dbReference>
<dbReference type="Ensembl" id="ENSSSCT00070050221.1">
    <property type="protein sequence ID" value="ENSSSCP00070042436.1"/>
    <property type="gene ID" value="ENSSSCG00070025122.1"/>
</dbReference>
<dbReference type="Ensembl" id="ENSSSCT00090027272">
    <property type="protein sequence ID" value="ENSSSCP00090016866"/>
    <property type="gene ID" value="ENSSSCG00090015491"/>
</dbReference>
<dbReference type="Ensembl" id="ENSSSCT00105023400">
    <property type="protein sequence ID" value="ENSSSCP00105016790"/>
    <property type="gene ID" value="ENSSSCG00105011631"/>
</dbReference>
<dbReference type="Ensembl" id="ENSSSCT00110049999">
    <property type="protein sequence ID" value="ENSSSCP00110035137"/>
    <property type="gene ID" value="ENSSSCG00110025803"/>
</dbReference>
<dbReference type="Ensembl" id="ENSSSCT00115018639">
    <property type="protein sequence ID" value="ENSSSCP00115017618"/>
    <property type="gene ID" value="ENSSSCG00115010655"/>
</dbReference>
<dbReference type="Ensembl" id="ENSSSCT00130019031">
    <property type="protein sequence ID" value="ENSSSCP00130012878"/>
    <property type="gene ID" value="ENSSSCG00130010160"/>
</dbReference>
<dbReference type="GeneID" id="100524676"/>
<dbReference type="KEGG" id="ssc:100524676"/>
<dbReference type="CTD" id="6391"/>
<dbReference type="VGNC" id="VGNC:98852">
    <property type="gene designation" value="SDHC"/>
</dbReference>
<dbReference type="eggNOG" id="KOG0449">
    <property type="taxonomic scope" value="Eukaryota"/>
</dbReference>
<dbReference type="GeneTree" id="ENSGT00390000000566"/>
<dbReference type="HOGENOM" id="CLU_094691_1_1_1"/>
<dbReference type="InParanoid" id="D0VWV4"/>
<dbReference type="OMA" id="MNGIRHL"/>
<dbReference type="OrthoDB" id="588261at2759"/>
<dbReference type="TreeFam" id="TF313317"/>
<dbReference type="Reactome" id="R-SSC-71403">
    <property type="pathway name" value="Citric acid cycle (TCA cycle)"/>
</dbReference>
<dbReference type="Reactome" id="R-SSC-9854311">
    <property type="pathway name" value="Maturation of TCA enzymes and regulation of TCA cycle"/>
</dbReference>
<dbReference type="UniPathway" id="UPA00223"/>
<dbReference type="EvolutionaryTrace" id="D0VWV4"/>
<dbReference type="Proteomes" id="UP000008227">
    <property type="component" value="Chromosome 4"/>
</dbReference>
<dbReference type="Proteomes" id="UP000314985">
    <property type="component" value="Chromosome 4"/>
</dbReference>
<dbReference type="Proteomes" id="UP000694570">
    <property type="component" value="Unplaced"/>
</dbReference>
<dbReference type="Proteomes" id="UP000694571">
    <property type="component" value="Unplaced"/>
</dbReference>
<dbReference type="Proteomes" id="UP000694720">
    <property type="component" value="Unplaced"/>
</dbReference>
<dbReference type="Proteomes" id="UP000694722">
    <property type="component" value="Unplaced"/>
</dbReference>
<dbReference type="Proteomes" id="UP000694723">
    <property type="component" value="Unplaced"/>
</dbReference>
<dbReference type="Proteomes" id="UP000694724">
    <property type="component" value="Unplaced"/>
</dbReference>
<dbReference type="Proteomes" id="UP000694725">
    <property type="component" value="Unplaced"/>
</dbReference>
<dbReference type="Proteomes" id="UP000694726">
    <property type="component" value="Unplaced"/>
</dbReference>
<dbReference type="Proteomes" id="UP000694727">
    <property type="component" value="Unplaced"/>
</dbReference>
<dbReference type="Proteomes" id="UP000694728">
    <property type="component" value="Unplaced"/>
</dbReference>
<dbReference type="Bgee" id="ENSSSCG00000030318">
    <property type="expression patterns" value="Expressed in metanephros cortex and 45 other cell types or tissues"/>
</dbReference>
<dbReference type="ExpressionAtlas" id="D0VWV4">
    <property type="expression patterns" value="baseline and differential"/>
</dbReference>
<dbReference type="GO" id="GO:0005743">
    <property type="term" value="C:mitochondrial inner membrane"/>
    <property type="evidence" value="ECO:0000314"/>
    <property type="project" value="UniProtKB"/>
</dbReference>
<dbReference type="GO" id="GO:0045273">
    <property type="term" value="C:respiratory chain complex II (succinate dehydrogenase)"/>
    <property type="evidence" value="ECO:0000314"/>
    <property type="project" value="UniProtKB"/>
</dbReference>
<dbReference type="GO" id="GO:0009055">
    <property type="term" value="F:electron transfer activity"/>
    <property type="evidence" value="ECO:0007669"/>
    <property type="project" value="InterPro"/>
</dbReference>
<dbReference type="GO" id="GO:0020037">
    <property type="term" value="F:heme binding"/>
    <property type="evidence" value="ECO:0000314"/>
    <property type="project" value="UniProtKB"/>
</dbReference>
<dbReference type="GO" id="GO:0046872">
    <property type="term" value="F:metal ion binding"/>
    <property type="evidence" value="ECO:0007669"/>
    <property type="project" value="UniProtKB-KW"/>
</dbReference>
<dbReference type="GO" id="GO:0043495">
    <property type="term" value="F:protein-membrane adaptor activity"/>
    <property type="evidence" value="ECO:0000314"/>
    <property type="project" value="FlyBase"/>
</dbReference>
<dbReference type="GO" id="GO:0006121">
    <property type="term" value="P:mitochondrial electron transport, succinate to ubiquinone"/>
    <property type="evidence" value="ECO:0000318"/>
    <property type="project" value="GO_Central"/>
</dbReference>
<dbReference type="GO" id="GO:0006099">
    <property type="term" value="P:tricarboxylic acid cycle"/>
    <property type="evidence" value="ECO:0007669"/>
    <property type="project" value="UniProtKB-UniPathway"/>
</dbReference>
<dbReference type="CDD" id="cd03499">
    <property type="entry name" value="SQR_TypeC_SdhC"/>
    <property type="match status" value="1"/>
</dbReference>
<dbReference type="FunFam" id="1.20.1300.10:FF:000006">
    <property type="entry name" value="Succinate dehydrogenase cytochrome b560 subunit, mitochondrial"/>
    <property type="match status" value="1"/>
</dbReference>
<dbReference type="FunFam" id="1.20.5.540:FF:000002">
    <property type="entry name" value="Succinate dehydrogenase cytochrome b560 subunit, mitochondrial"/>
    <property type="match status" value="1"/>
</dbReference>
<dbReference type="Gene3D" id="1.20.1300.10">
    <property type="entry name" value="Fumarate reductase/succinate dehydrogenase, transmembrane subunit"/>
    <property type="match status" value="1"/>
</dbReference>
<dbReference type="Gene3D" id="1.20.5.540">
    <property type="entry name" value="Single helix bin"/>
    <property type="match status" value="1"/>
</dbReference>
<dbReference type="InterPro" id="IPR034804">
    <property type="entry name" value="SQR/QFR_C/D"/>
</dbReference>
<dbReference type="InterPro" id="IPR018495">
    <property type="entry name" value="Succ_DH_cyt_bsu_CS"/>
</dbReference>
<dbReference type="InterPro" id="IPR014314">
    <property type="entry name" value="Succ_DH_cytb556"/>
</dbReference>
<dbReference type="InterPro" id="IPR000701">
    <property type="entry name" value="SuccDH_FuR_B_TM-su"/>
</dbReference>
<dbReference type="NCBIfam" id="TIGR02970">
    <property type="entry name" value="succ_dehyd_cytB"/>
    <property type="match status" value="1"/>
</dbReference>
<dbReference type="PANTHER" id="PTHR10978">
    <property type="entry name" value="SUCCINATE DEHYDROGENASE CYTOCHROME B560 SUBUNIT"/>
    <property type="match status" value="1"/>
</dbReference>
<dbReference type="PANTHER" id="PTHR10978:SF5">
    <property type="entry name" value="SUCCINATE DEHYDROGENASE CYTOCHROME B560 SUBUNIT, MITOCHONDRIAL"/>
    <property type="match status" value="1"/>
</dbReference>
<dbReference type="Pfam" id="PF01127">
    <property type="entry name" value="Sdh_cyt"/>
    <property type="match status" value="1"/>
</dbReference>
<dbReference type="SUPFAM" id="SSF81343">
    <property type="entry name" value="Fumarate reductase respiratory complex transmembrane subunits"/>
    <property type="match status" value="1"/>
</dbReference>
<dbReference type="PROSITE" id="PS01000">
    <property type="entry name" value="SDH_CYT_1"/>
    <property type="match status" value="1"/>
</dbReference>
<dbReference type="PROSITE" id="PS01001">
    <property type="entry name" value="SDH_CYT_2"/>
    <property type="match status" value="1"/>
</dbReference>
<comment type="function">
    <text evidence="1 3">Membrane-anchoring subunit of succinate dehydrogenase (SDH) that is involved in complex II of the mitochondrial electron transport chain and is responsible for transferring electrons from succinate to ubiquinone (coenzyme Q) (PubMed:17480203). SDH also oxidizes malate to the non-canonical enol form of oxaloacetate, enol-oxaloacetate (By similarity). Enol-oxaloacetate, which is a potent inhibitor of the succinate dehydrogenase activity, is further isomerized into keto-oxaloacetate (By similarity).</text>
</comment>
<comment type="cofactor">
    <cofactor evidence="2">
        <name>heme b</name>
        <dbReference type="ChEBI" id="CHEBI:60344"/>
    </cofactor>
    <text evidence="2">The heme b is bound between the two transmembrane subunits SDHC and SDHD.</text>
</comment>
<comment type="pathway">
    <text evidence="3">Carbohydrate metabolism; tricarboxylic acid cycle.</text>
</comment>
<comment type="subunit">
    <text evidence="2">Component of complex II composed of four subunits: the flavoprotein (FP) SDHA, iron-sulfur protein (IP) SDHB, and a cytochrome b560 composed of SDHC and SDHD.</text>
</comment>
<comment type="subcellular location">
    <subcellularLocation>
        <location evidence="3">Mitochondrion inner membrane</location>
        <topology evidence="3">Multi-pass membrane protein</topology>
    </subcellularLocation>
</comment>
<comment type="tissue specificity">
    <text evidence="3">Detected in heart muscle (at protein level).</text>
</comment>
<comment type="similarity">
    <text evidence="4">Belongs to the cytochrome b560 family.</text>
</comment>
<keyword id="KW-0002">3D-structure</keyword>
<keyword id="KW-0249">Electron transport</keyword>
<keyword id="KW-0349">Heme</keyword>
<keyword id="KW-0408">Iron</keyword>
<keyword id="KW-0472">Membrane</keyword>
<keyword id="KW-0479">Metal-binding</keyword>
<keyword id="KW-0496">Mitochondrion</keyword>
<keyword id="KW-0999">Mitochondrion inner membrane</keyword>
<keyword id="KW-1185">Reference proteome</keyword>
<keyword id="KW-0809">Transit peptide</keyword>
<keyword id="KW-0812">Transmembrane</keyword>
<keyword id="KW-1133">Transmembrane helix</keyword>
<keyword id="KW-0813">Transport</keyword>
<keyword id="KW-0816">Tricarboxylic acid cycle</keyword>
<sequence>MAALLLRHVGRHCLRAHLSPQLCIRNAVPLGTTAKEEMERFWNKNLGSNRPLSPHITIYRWSLPMAMSICHRGTGIALSAGVSLFGLSALLLPGNFESHLELVKSLCLGPTLIYTAKFGIVFPLMYHTWNGIRHLIWDLGKGLTIPQLTQSGVVVLILTVLSSVGLAAM</sequence>
<proteinExistence type="evidence at protein level"/>
<evidence type="ECO:0000250" key="1">
    <source>
        <dbReference type="UniProtKB" id="P35720"/>
    </source>
</evidence>
<evidence type="ECO:0000269" key="2">
    <source>
    </source>
</evidence>
<evidence type="ECO:0000269" key="3">
    <source>
    </source>
</evidence>
<evidence type="ECO:0000305" key="4"/>
<evidence type="ECO:0000305" key="5">
    <source>
    </source>
</evidence>
<evidence type="ECO:0007744" key="6">
    <source>
        <dbReference type="PDB" id="1ZOY"/>
    </source>
</evidence>
<evidence type="ECO:0007744" key="7">
    <source>
        <dbReference type="PDB" id="1ZP0"/>
    </source>
</evidence>
<evidence type="ECO:0007829" key="8">
    <source>
        <dbReference type="PDB" id="1ZOY"/>
    </source>
</evidence>
<evidence type="ECO:0007829" key="9">
    <source>
        <dbReference type="PDB" id="3AEA"/>
    </source>
</evidence>
<evidence type="ECO:0007829" key="10">
    <source>
        <dbReference type="PDB" id="3AEF"/>
    </source>
</evidence>
<evidence type="ECO:0007829" key="11">
    <source>
        <dbReference type="PDB" id="3SFD"/>
    </source>
</evidence>
<feature type="transit peptide" description="Mitochondrion" evidence="1">
    <location>
        <begin position="1"/>
        <end position="29"/>
    </location>
</feature>
<feature type="chain" id="PRO_0000391750" description="Succinate dehydrogenase cytochrome b560 subunit, mitochondrial">
    <location>
        <begin position="30"/>
        <end position="169"/>
    </location>
</feature>
<feature type="topological domain" description="Mitochondrial matrix" evidence="5">
    <location>
        <begin position="30"/>
        <end position="62"/>
    </location>
</feature>
<feature type="transmembrane region" description="Helical" evidence="5">
    <location>
        <begin position="63"/>
        <end position="92"/>
    </location>
</feature>
<feature type="topological domain" description="Mitochondrial intermembrane" evidence="5">
    <location>
        <begin position="93"/>
        <end position="112"/>
    </location>
</feature>
<feature type="transmembrane region" description="Helical" evidence="5">
    <location>
        <begin position="113"/>
        <end position="137"/>
    </location>
</feature>
<feature type="topological domain" description="Mitochondrial matrix" evidence="5">
    <location>
        <begin position="138"/>
        <end position="144"/>
    </location>
</feature>
<feature type="transmembrane region" description="Helical" evidence="5">
    <location>
        <begin position="145"/>
        <end position="166"/>
    </location>
</feature>
<feature type="topological domain" description="Mitochondrial intermembrane" evidence="5">
    <location>
        <begin position="167"/>
        <end position="169"/>
    </location>
</feature>
<feature type="binding site" description="axial binding residue" evidence="2 6 7">
    <location>
        <position position="127"/>
    </location>
    <ligand>
        <name>heme b</name>
        <dbReference type="ChEBI" id="CHEBI:60344"/>
        <note>ligand shared with SDHD</note>
    </ligand>
    <ligandPart>
        <name>Fe</name>
        <dbReference type="ChEBI" id="CHEBI:18248"/>
    </ligandPart>
</feature>
<feature type="helix" evidence="8">
    <location>
        <begin position="34"/>
        <end position="46"/>
    </location>
</feature>
<feature type="turn" evidence="9">
    <location>
        <begin position="47"/>
        <end position="49"/>
    </location>
</feature>
<feature type="turn" evidence="8">
    <location>
        <begin position="56"/>
        <end position="58"/>
    </location>
</feature>
<feature type="helix" evidence="8">
    <location>
        <begin position="63"/>
        <end position="91"/>
    </location>
</feature>
<feature type="strand" evidence="10">
    <location>
        <begin position="92"/>
        <end position="94"/>
    </location>
</feature>
<feature type="helix" evidence="8">
    <location>
        <begin position="96"/>
        <end position="104"/>
    </location>
</feature>
<feature type="turn" evidence="8">
    <location>
        <begin position="105"/>
        <end position="107"/>
    </location>
</feature>
<feature type="helix" evidence="8">
    <location>
        <begin position="110"/>
        <end position="138"/>
    </location>
</feature>
<feature type="turn" evidence="11">
    <location>
        <begin position="139"/>
        <end position="142"/>
    </location>
</feature>
<feature type="helix" evidence="8">
    <location>
        <begin position="145"/>
        <end position="166"/>
    </location>
</feature>
<gene>
    <name type="primary">SDHC</name>
</gene>
<organism>
    <name type="scientific">Sus scrofa</name>
    <name type="common">Pig</name>
    <dbReference type="NCBI Taxonomy" id="9823"/>
    <lineage>
        <taxon>Eukaryota</taxon>
        <taxon>Metazoa</taxon>
        <taxon>Chordata</taxon>
        <taxon>Craniata</taxon>
        <taxon>Vertebrata</taxon>
        <taxon>Euteleostomi</taxon>
        <taxon>Mammalia</taxon>
        <taxon>Eutheria</taxon>
        <taxon>Laurasiatheria</taxon>
        <taxon>Artiodactyla</taxon>
        <taxon>Suina</taxon>
        <taxon>Suidae</taxon>
        <taxon>Sus</taxon>
    </lineage>
</organism>
<reference key="1">
    <citation type="journal article" date="2007" name="FEBS J.">
        <title>Preliminary molecular characterization and crystallization of mitochondrial respiratory complex II from porcine heart.</title>
        <authorList>
            <person name="Huo X."/>
            <person name="Su D."/>
            <person name="Wang A."/>
            <person name="Zhai Y."/>
            <person name="Xu J."/>
            <person name="Li X."/>
            <person name="Bartlam M."/>
            <person name="Sun F."/>
            <person name="Rao Z."/>
        </authorList>
    </citation>
    <scope>NUCLEOTIDE SEQUENCE [MRNA]</scope>
    <scope>FUNCTION</scope>
    <scope>SUBCELLULAR LOCATION</scope>
    <scope>TISSUE SPECIFICITY</scope>
    <source>
        <tissue>Heart</tissue>
    </source>
</reference>
<reference evidence="6 7" key="2">
    <citation type="journal article" date="2005" name="Cell">
        <title>Crystal structure of mitochondrial respiratory membrane protein complex II.</title>
        <authorList>
            <person name="Sun F."/>
            <person name="Huo X."/>
            <person name="Zhai Y."/>
            <person name="Wang A."/>
            <person name="Xu J."/>
            <person name="Su D."/>
            <person name="Bartlam M."/>
            <person name="Rao Z."/>
        </authorList>
    </citation>
    <scope>X-RAY CRYSTALLOGRAPHY (2.4 ANGSTROMS) OF 30-169 IN COMPLEXES WITH HEME</scope>
    <scope>SUBUNIT</scope>
    <scope>MEMBRANE TOPOLOGY</scope>
</reference>
<protein>
    <recommendedName>
        <fullName>Succinate dehydrogenase cytochrome b560 subunit, mitochondrial</fullName>
    </recommendedName>
    <alternativeName>
        <fullName>Malate dehydrogenase [quinone] cytochrome b560 subunit</fullName>
    </alternativeName>
    <alternativeName>
        <fullName>Succinate-ubiquinone oxidoreductase cytochrome B large subunit</fullName>
        <shortName>CYBL</shortName>
    </alternativeName>
</protein>